<name>MT1A_SHEEP</name>
<sequence>MDPNCSCPTGGSCSCAGSCTCKACRCPSCKKSCCSCCPVGCAKCAQGCVCKGASDKCSCCA</sequence>
<accession>P67982</accession>
<accession>P04356</accession>
<accession>P04902</accession>
<proteinExistence type="inferred from homology"/>
<feature type="chain" id="PRO_0000197227" description="Metallothionein-1A">
    <location>
        <begin position="1"/>
        <end position="61"/>
    </location>
</feature>
<feature type="region of interest" description="Beta">
    <location>
        <begin position="1"/>
        <end position="29"/>
    </location>
</feature>
<feature type="region of interest" description="Alpha">
    <location>
        <begin position="30"/>
        <end position="61"/>
    </location>
</feature>
<feature type="binding site" evidence="1">
    <location>
        <position position="5"/>
    </location>
    <ligand>
        <name>a divalent metal cation</name>
        <dbReference type="ChEBI" id="CHEBI:60240"/>
        <label>1</label>
        <note>in cluster B</note>
    </ligand>
</feature>
<feature type="binding site" evidence="1">
    <location>
        <position position="7"/>
    </location>
    <ligand>
        <name>a divalent metal cation</name>
        <dbReference type="ChEBI" id="CHEBI:60240"/>
        <label>1</label>
        <note>in cluster B</note>
    </ligand>
</feature>
<feature type="binding site" evidence="1">
    <location>
        <position position="7"/>
    </location>
    <ligand>
        <name>a divalent metal cation</name>
        <dbReference type="ChEBI" id="CHEBI:60240"/>
        <label>2</label>
        <note>in cluster B</note>
    </ligand>
</feature>
<feature type="binding site" evidence="1">
    <location>
        <position position="13"/>
    </location>
    <ligand>
        <name>a divalent metal cation</name>
        <dbReference type="ChEBI" id="CHEBI:60240"/>
        <label>2</label>
        <note>in cluster B</note>
    </ligand>
</feature>
<feature type="binding site" evidence="1">
    <location>
        <position position="15"/>
    </location>
    <ligand>
        <name>a divalent metal cation</name>
        <dbReference type="ChEBI" id="CHEBI:60240"/>
        <label>2</label>
        <note>in cluster B</note>
    </ligand>
</feature>
<feature type="binding site" evidence="1">
    <location>
        <position position="15"/>
    </location>
    <ligand>
        <name>a divalent metal cation</name>
        <dbReference type="ChEBI" id="CHEBI:60240"/>
        <label>3</label>
        <note>in cluster B</note>
    </ligand>
</feature>
<feature type="binding site" evidence="1">
    <location>
        <position position="19"/>
    </location>
    <ligand>
        <name>a divalent metal cation</name>
        <dbReference type="ChEBI" id="CHEBI:60240"/>
        <label>3</label>
        <note>in cluster B</note>
    </ligand>
</feature>
<feature type="binding site" evidence="1">
    <location>
        <position position="21"/>
    </location>
    <ligand>
        <name>a divalent metal cation</name>
        <dbReference type="ChEBI" id="CHEBI:60240"/>
        <label>1</label>
        <note>in cluster B</note>
    </ligand>
</feature>
<feature type="binding site" evidence="1">
    <location>
        <position position="24"/>
    </location>
    <ligand>
        <name>a divalent metal cation</name>
        <dbReference type="ChEBI" id="CHEBI:60240"/>
        <label>1</label>
        <note>in cluster B</note>
    </ligand>
</feature>
<feature type="binding site" evidence="1">
    <location>
        <position position="24"/>
    </location>
    <ligand>
        <name>a divalent metal cation</name>
        <dbReference type="ChEBI" id="CHEBI:60240"/>
        <label>3</label>
        <note>in cluster B</note>
    </ligand>
</feature>
<feature type="binding site" evidence="1">
    <location>
        <position position="26"/>
    </location>
    <ligand>
        <name>a divalent metal cation</name>
        <dbReference type="ChEBI" id="CHEBI:60240"/>
        <label>2</label>
        <note>in cluster B</note>
    </ligand>
</feature>
<feature type="binding site" evidence="1">
    <location>
        <position position="29"/>
    </location>
    <ligand>
        <name>a divalent metal cation</name>
        <dbReference type="ChEBI" id="CHEBI:60240"/>
        <label>3</label>
        <note>in cluster B</note>
    </ligand>
</feature>
<feature type="binding site" evidence="1">
    <location>
        <position position="33"/>
    </location>
    <ligand>
        <name>a divalent metal cation</name>
        <dbReference type="ChEBI" id="CHEBI:60240"/>
        <label>4</label>
        <note>in cluster A</note>
    </ligand>
</feature>
<feature type="binding site" evidence="1">
    <location>
        <position position="34"/>
    </location>
    <ligand>
        <name>a divalent metal cation</name>
        <dbReference type="ChEBI" id="CHEBI:60240"/>
        <label>4</label>
        <note>in cluster A</note>
    </ligand>
</feature>
<feature type="binding site" evidence="1">
    <location>
        <position position="34"/>
    </location>
    <ligand>
        <name>a divalent metal cation</name>
        <dbReference type="ChEBI" id="CHEBI:60240"/>
        <label>5</label>
        <note>in cluster A</note>
    </ligand>
</feature>
<feature type="binding site" evidence="1">
    <location>
        <position position="36"/>
    </location>
    <ligand>
        <name>a divalent metal cation</name>
        <dbReference type="ChEBI" id="CHEBI:60240"/>
        <label>5</label>
        <note>in cluster A</note>
    </ligand>
</feature>
<feature type="binding site" evidence="1">
    <location>
        <position position="37"/>
    </location>
    <ligand>
        <name>a divalent metal cation</name>
        <dbReference type="ChEBI" id="CHEBI:60240"/>
        <label>5</label>
        <note>in cluster A</note>
    </ligand>
</feature>
<feature type="binding site" evidence="1">
    <location>
        <position position="37"/>
    </location>
    <ligand>
        <name>a divalent metal cation</name>
        <dbReference type="ChEBI" id="CHEBI:60240"/>
        <label>6</label>
        <note>in cluster A</note>
    </ligand>
</feature>
<feature type="binding site" evidence="1">
    <location>
        <position position="41"/>
    </location>
    <ligand>
        <name>a divalent metal cation</name>
        <dbReference type="ChEBI" id="CHEBI:60240"/>
        <label>6</label>
        <note>in cluster A</note>
    </ligand>
</feature>
<feature type="binding site" evidence="1">
    <location>
        <position position="44"/>
    </location>
    <ligand>
        <name>a divalent metal cation</name>
        <dbReference type="ChEBI" id="CHEBI:60240"/>
        <label>4</label>
        <note>in cluster A</note>
    </ligand>
</feature>
<feature type="binding site" evidence="1">
    <location>
        <position position="44"/>
    </location>
    <ligand>
        <name>a divalent metal cation</name>
        <dbReference type="ChEBI" id="CHEBI:60240"/>
        <label>6</label>
        <note>in cluster A</note>
    </ligand>
</feature>
<feature type="binding site" evidence="1">
    <location>
        <position position="48"/>
    </location>
    <ligand>
        <name>a divalent metal cation</name>
        <dbReference type="ChEBI" id="CHEBI:60240"/>
        <label>4</label>
        <note>in cluster A</note>
    </ligand>
</feature>
<feature type="binding site" evidence="1">
    <location>
        <position position="50"/>
    </location>
    <ligand>
        <name>a divalent metal cation</name>
        <dbReference type="ChEBI" id="CHEBI:60240"/>
        <label>5</label>
        <note>in cluster A</note>
    </ligand>
</feature>
<feature type="binding site" evidence="1">
    <location>
        <position position="50"/>
    </location>
    <ligand>
        <name>a divalent metal cation</name>
        <dbReference type="ChEBI" id="CHEBI:60240"/>
        <label>7</label>
        <note>in cluster A</note>
    </ligand>
</feature>
<feature type="binding site" evidence="1">
    <location>
        <position position="57"/>
    </location>
    <ligand>
        <name>a divalent metal cation</name>
        <dbReference type="ChEBI" id="CHEBI:60240"/>
        <label>7</label>
        <note>in cluster A</note>
    </ligand>
</feature>
<feature type="binding site" evidence="1">
    <location>
        <position position="59"/>
    </location>
    <ligand>
        <name>a divalent metal cation</name>
        <dbReference type="ChEBI" id="CHEBI:60240"/>
        <label>7</label>
        <note>in cluster A</note>
    </ligand>
</feature>
<feature type="binding site" evidence="1">
    <location>
        <position position="60"/>
    </location>
    <ligand>
        <name>a divalent metal cation</name>
        <dbReference type="ChEBI" id="CHEBI:60240"/>
        <label>6</label>
        <note>in cluster A</note>
    </ligand>
</feature>
<feature type="binding site" evidence="1">
    <location>
        <position position="60"/>
    </location>
    <ligand>
        <name>a divalent metal cation</name>
        <dbReference type="ChEBI" id="CHEBI:60240"/>
        <label>7</label>
        <note>in cluster A</note>
    </ligand>
</feature>
<feature type="modified residue" description="N-acetylmethionine" evidence="2">
    <location>
        <position position="1"/>
    </location>
</feature>
<feature type="modified residue" description="Phosphoserine" evidence="1">
    <location>
        <position position="58"/>
    </location>
</feature>
<reference key="1">
    <citation type="journal article" date="1984" name="Eur. J. Biochem.">
        <title>Cloning and sequencing of a sheep metallothionein cDNA.</title>
        <authorList>
            <person name="Peterson M.G."/>
            <person name="Lazdins I."/>
            <person name="Danks D.M."/>
            <person name="Mercer J.F.B."/>
        </authorList>
    </citation>
    <scope>NUCLEOTIDE SEQUENCE [MRNA]</scope>
</reference>
<reference key="2">
    <citation type="journal article" date="1986" name="Eur. J. Biochem.">
        <title>Structure and regulation of the sheep metallothionein-Ia gene.</title>
        <authorList>
            <person name="Peterson M.G."/>
            <person name="Mercer J.F.B."/>
        </authorList>
    </citation>
    <scope>NUCLEOTIDE SEQUENCE [GENOMIC DNA]</scope>
</reference>
<keyword id="KW-0007">Acetylation</keyword>
<keyword id="KW-0479">Metal-binding</keyword>
<keyword id="KW-0480">Metal-thiolate cluster</keyword>
<keyword id="KW-0597">Phosphoprotein</keyword>
<keyword id="KW-1185">Reference proteome</keyword>
<protein>
    <recommendedName>
        <fullName>Metallothionein-1A</fullName>
        <shortName>MT-1A</shortName>
    </recommendedName>
    <alternativeName>
        <fullName>MTC</fullName>
    </alternativeName>
    <alternativeName>
        <fullName>Metallothionein-IA</fullName>
        <shortName>MT-IA</shortName>
    </alternativeName>
</protein>
<organism>
    <name type="scientific">Ovis aries</name>
    <name type="common">Sheep</name>
    <dbReference type="NCBI Taxonomy" id="9940"/>
    <lineage>
        <taxon>Eukaryota</taxon>
        <taxon>Metazoa</taxon>
        <taxon>Chordata</taxon>
        <taxon>Craniata</taxon>
        <taxon>Vertebrata</taxon>
        <taxon>Euteleostomi</taxon>
        <taxon>Mammalia</taxon>
        <taxon>Eutheria</taxon>
        <taxon>Laurasiatheria</taxon>
        <taxon>Artiodactyla</taxon>
        <taxon>Ruminantia</taxon>
        <taxon>Pecora</taxon>
        <taxon>Bovidae</taxon>
        <taxon>Caprinae</taxon>
        <taxon>Ovis</taxon>
    </lineage>
</organism>
<gene>
    <name type="primary">MT1A</name>
    <name type="synonym">MT-IA</name>
</gene>
<comment type="function">
    <text>Metallothioneins have a high content of cysteine residues that bind various heavy metals; these proteins are transcriptionally regulated by both heavy metals and glucocorticoids.</text>
</comment>
<comment type="subunit">
    <text>Monomer.</text>
</comment>
<comment type="domain">
    <text>Class I metallothioneins contain 2 metal-binding domains: four divalent ions are chelated within cluster A of the alpha domain and are coordinated via cysteinyl thiolate bridges to 11 cysteine ligands. Cluster B, the corresponding region within the beta domain, can ligate three divalent ions to 9 cysteines.</text>
</comment>
<comment type="similarity">
    <text evidence="3">Belongs to the metallothionein superfamily. Type 1 family.</text>
</comment>
<dbReference type="EMBL" id="X00953">
    <property type="protein sequence ID" value="CAA25464.1"/>
    <property type="molecule type" value="mRNA"/>
</dbReference>
<dbReference type="EMBL" id="X04626">
    <property type="protein sequence ID" value="CAA28299.1"/>
    <property type="molecule type" value="Genomic_DNA"/>
</dbReference>
<dbReference type="PIR" id="A03279">
    <property type="entry name" value="SMBO2"/>
</dbReference>
<dbReference type="PIR" id="S00808">
    <property type="entry name" value="S00808"/>
</dbReference>
<dbReference type="SMR" id="P67982"/>
<dbReference type="STRING" id="9940.ENSOARP00000019687"/>
<dbReference type="PaxDb" id="9940-ENSOARP00000019687"/>
<dbReference type="Ensembl" id="ENSOART00025014637">
    <property type="protein sequence ID" value="ENSOARP00025007353"/>
    <property type="gene ID" value="ENSOARG00025008880"/>
</dbReference>
<dbReference type="Ensembl" id="ENSOART00040040550">
    <property type="protein sequence ID" value="ENSOARP00040020996"/>
    <property type="gene ID" value="ENSOARG00040024350"/>
</dbReference>
<dbReference type="Ensembl" id="ENSOART00180009121">
    <property type="protein sequence ID" value="ENSOARP00180004795"/>
    <property type="gene ID" value="ENSOARG00180005562"/>
</dbReference>
<dbReference type="GeneID" id="101117184"/>
<dbReference type="KEGG" id="oas:101117184"/>
<dbReference type="eggNOG" id="KOG4738">
    <property type="taxonomic scope" value="Eukaryota"/>
</dbReference>
<dbReference type="HOGENOM" id="CLU_171204_2_0_1"/>
<dbReference type="Proteomes" id="UP000002356">
    <property type="component" value="Chromosome 14"/>
</dbReference>
<dbReference type="Bgee" id="ENSOARG00000018341">
    <property type="expression patterns" value="Expressed in embryo and 52 other cell types or tissues"/>
</dbReference>
<dbReference type="ExpressionAtlas" id="P67982">
    <property type="expression patterns" value="baseline"/>
</dbReference>
<dbReference type="GO" id="GO:0005737">
    <property type="term" value="C:cytoplasm"/>
    <property type="evidence" value="ECO:0000250"/>
    <property type="project" value="UniProtKB"/>
</dbReference>
<dbReference type="GO" id="GO:0005634">
    <property type="term" value="C:nucleus"/>
    <property type="evidence" value="ECO:0000250"/>
    <property type="project" value="UniProtKB"/>
</dbReference>
<dbReference type="GO" id="GO:0008270">
    <property type="term" value="F:zinc ion binding"/>
    <property type="evidence" value="ECO:0000250"/>
    <property type="project" value="UniProtKB"/>
</dbReference>
<dbReference type="GO" id="GO:0071276">
    <property type="term" value="P:cellular response to cadmium ion"/>
    <property type="evidence" value="ECO:0007669"/>
    <property type="project" value="TreeGrafter"/>
</dbReference>
<dbReference type="GO" id="GO:0071280">
    <property type="term" value="P:cellular response to copper ion"/>
    <property type="evidence" value="ECO:0007669"/>
    <property type="project" value="TreeGrafter"/>
</dbReference>
<dbReference type="GO" id="GO:0071294">
    <property type="term" value="P:cellular response to zinc ion"/>
    <property type="evidence" value="ECO:0000250"/>
    <property type="project" value="UniProtKB"/>
</dbReference>
<dbReference type="GO" id="GO:0010273">
    <property type="term" value="P:detoxification of copper ion"/>
    <property type="evidence" value="ECO:0007669"/>
    <property type="project" value="TreeGrafter"/>
</dbReference>
<dbReference type="GO" id="GO:0006882">
    <property type="term" value="P:intracellular zinc ion homeostasis"/>
    <property type="evidence" value="ECO:0007669"/>
    <property type="project" value="TreeGrafter"/>
</dbReference>
<dbReference type="GO" id="GO:0045926">
    <property type="term" value="P:negative regulation of growth"/>
    <property type="evidence" value="ECO:0000250"/>
    <property type="project" value="UniProtKB"/>
</dbReference>
<dbReference type="FunFam" id="4.10.10.10:FF:000001">
    <property type="entry name" value="Metallothionein"/>
    <property type="match status" value="1"/>
</dbReference>
<dbReference type="Gene3D" id="4.10.10.10">
    <property type="entry name" value="Metallothionein Isoform II"/>
    <property type="match status" value="1"/>
</dbReference>
<dbReference type="InterPro" id="IPR017854">
    <property type="entry name" value="Metalthion_dom_sf"/>
</dbReference>
<dbReference type="InterPro" id="IPR023587">
    <property type="entry name" value="Metalthion_dom_sf_vert"/>
</dbReference>
<dbReference type="InterPro" id="IPR000006">
    <property type="entry name" value="Metalthion_vert"/>
</dbReference>
<dbReference type="InterPro" id="IPR018064">
    <property type="entry name" value="Metalthion_vert_metal_BS"/>
</dbReference>
<dbReference type="PANTHER" id="PTHR23299">
    <property type="entry name" value="METALLOTHIONEIN"/>
    <property type="match status" value="1"/>
</dbReference>
<dbReference type="PANTHER" id="PTHR23299:SF22">
    <property type="entry name" value="METALLOTHIONEIN-1G"/>
    <property type="match status" value="1"/>
</dbReference>
<dbReference type="Pfam" id="PF00131">
    <property type="entry name" value="Metallothio"/>
    <property type="match status" value="1"/>
</dbReference>
<dbReference type="PRINTS" id="PR00860">
    <property type="entry name" value="MTVERTEBRATE"/>
</dbReference>
<dbReference type="SUPFAM" id="SSF57868">
    <property type="entry name" value="Metallothionein"/>
    <property type="match status" value="1"/>
</dbReference>
<dbReference type="PROSITE" id="PS00203">
    <property type="entry name" value="METALLOTHIONEIN_VRT"/>
    <property type="match status" value="1"/>
</dbReference>
<evidence type="ECO:0000250" key="1">
    <source>
        <dbReference type="UniProtKB" id="P02795"/>
    </source>
</evidence>
<evidence type="ECO:0000250" key="2">
    <source>
        <dbReference type="UniProtKB" id="P11957"/>
    </source>
</evidence>
<evidence type="ECO:0000305" key="3"/>